<reference key="1">
    <citation type="journal article" date="2003" name="Proc. Natl. Acad. Sci. U.S.A.">
        <title>Complete genome sequence of the marine planctomycete Pirellula sp. strain 1.</title>
        <authorList>
            <person name="Gloeckner F.O."/>
            <person name="Kube M."/>
            <person name="Bauer M."/>
            <person name="Teeling H."/>
            <person name="Lombardot T."/>
            <person name="Ludwig W."/>
            <person name="Gade D."/>
            <person name="Beck A."/>
            <person name="Borzym K."/>
            <person name="Heitmann K."/>
            <person name="Rabus R."/>
            <person name="Schlesner H."/>
            <person name="Amann R."/>
            <person name="Reinhardt R."/>
        </authorList>
    </citation>
    <scope>NUCLEOTIDE SEQUENCE [LARGE SCALE GENOMIC DNA]</scope>
    <source>
        <strain>DSM 10527 / NCIMB 13988 / SH1</strain>
    </source>
</reference>
<sequence length="511" mass="56466">MIVSDDVVFEAKQISKLFPGVKALDGVDLTLRAGRLTTLLGENGAGKSTLMKILAGVQPPDEGELLVQGEPVHFTSPRDAQDHGIAMIHQELSLVPDLTVAENIFLGREPLRFETLIDYTELNRQANEWLKRLELDVSPTTPVRRLRVGQQQLVEIARALAGNVRILIMDEPTSAITERETEVLFRCIADLKKQGVAIVYITHRLEELEQIADDIVVMRDGCLIGTAEFGELSHDAMVRMMVGRDVKILSKQSSSNNQPVLRAEGISLSHPTRPGDYLVHEVDMHVCKGEVLGIFGLMGAGRTELLECLFGLHPTASTGQVSMHDRSVRLRNPADAISHGLALVPEDRKQDGLVLSMSVGENASLASLKHAERFGFIDRGREREHTRRFVERFRVKTPSLREKIINLSGGNQQKVILAKWLATGPAVLMLDEPTRGIDIHAKNEIYSLINELTADGLAVIMVSSELPEVMAVSDRILVMCEGRATQSFDRSEATEENILQAALPRRNSIPC</sequence>
<proteinExistence type="inferred from homology"/>
<accession>Q7UU57</accession>
<dbReference type="EC" id="7.5.2.7" evidence="1"/>
<dbReference type="EMBL" id="BX294138">
    <property type="protein sequence ID" value="CAD73227.1"/>
    <property type="molecule type" value="Genomic_DNA"/>
</dbReference>
<dbReference type="RefSeq" id="NP_865543.1">
    <property type="nucleotide sequence ID" value="NC_005027.1"/>
</dbReference>
<dbReference type="RefSeq" id="WP_011119386.1">
    <property type="nucleotide sequence ID" value="NC_005027.1"/>
</dbReference>
<dbReference type="SMR" id="Q7UU57"/>
<dbReference type="FunCoup" id="Q7UU57">
    <property type="interactions" value="81"/>
</dbReference>
<dbReference type="STRING" id="243090.RB3496"/>
<dbReference type="EnsemblBacteria" id="CAD73227">
    <property type="protein sequence ID" value="CAD73227"/>
    <property type="gene ID" value="RB3496"/>
</dbReference>
<dbReference type="KEGG" id="rba:RB3496"/>
<dbReference type="PATRIC" id="fig|243090.15.peg.1619"/>
<dbReference type="eggNOG" id="COG1129">
    <property type="taxonomic scope" value="Bacteria"/>
</dbReference>
<dbReference type="HOGENOM" id="CLU_000604_92_3_0"/>
<dbReference type="InParanoid" id="Q7UU57"/>
<dbReference type="OrthoDB" id="9771863at2"/>
<dbReference type="Proteomes" id="UP000001025">
    <property type="component" value="Chromosome"/>
</dbReference>
<dbReference type="GO" id="GO:0005886">
    <property type="term" value="C:plasma membrane"/>
    <property type="evidence" value="ECO:0007669"/>
    <property type="project" value="UniProtKB-SubCell"/>
</dbReference>
<dbReference type="GO" id="GO:0015611">
    <property type="term" value="F:ABC-type D-ribose transporter activity"/>
    <property type="evidence" value="ECO:0007669"/>
    <property type="project" value="UniProtKB-EC"/>
</dbReference>
<dbReference type="GO" id="GO:0005524">
    <property type="term" value="F:ATP binding"/>
    <property type="evidence" value="ECO:0007669"/>
    <property type="project" value="UniProtKB-KW"/>
</dbReference>
<dbReference type="GO" id="GO:0016887">
    <property type="term" value="F:ATP hydrolysis activity"/>
    <property type="evidence" value="ECO:0007669"/>
    <property type="project" value="InterPro"/>
</dbReference>
<dbReference type="CDD" id="cd03216">
    <property type="entry name" value="ABC_Carb_Monos_I"/>
    <property type="match status" value="1"/>
</dbReference>
<dbReference type="CDD" id="cd03215">
    <property type="entry name" value="ABC_Carb_Monos_II"/>
    <property type="match status" value="1"/>
</dbReference>
<dbReference type="FunFam" id="3.40.50.300:FF:000126">
    <property type="entry name" value="Galactose/methyl galactoside import ATP-binding protein MglA"/>
    <property type="match status" value="1"/>
</dbReference>
<dbReference type="FunFam" id="3.40.50.300:FF:000127">
    <property type="entry name" value="Ribose import ATP-binding protein RbsA"/>
    <property type="match status" value="1"/>
</dbReference>
<dbReference type="Gene3D" id="3.40.50.300">
    <property type="entry name" value="P-loop containing nucleotide triphosphate hydrolases"/>
    <property type="match status" value="2"/>
</dbReference>
<dbReference type="InterPro" id="IPR003593">
    <property type="entry name" value="AAA+_ATPase"/>
</dbReference>
<dbReference type="InterPro" id="IPR050107">
    <property type="entry name" value="ABC_carbohydrate_import_ATPase"/>
</dbReference>
<dbReference type="InterPro" id="IPR003439">
    <property type="entry name" value="ABC_transporter-like_ATP-bd"/>
</dbReference>
<dbReference type="InterPro" id="IPR017871">
    <property type="entry name" value="ABC_transporter-like_CS"/>
</dbReference>
<dbReference type="InterPro" id="IPR027417">
    <property type="entry name" value="P-loop_NTPase"/>
</dbReference>
<dbReference type="PANTHER" id="PTHR43790">
    <property type="entry name" value="CARBOHYDRATE TRANSPORT ATP-BINDING PROTEIN MG119-RELATED"/>
    <property type="match status" value="1"/>
</dbReference>
<dbReference type="PANTHER" id="PTHR43790:SF3">
    <property type="entry name" value="D-ALLOSE IMPORT ATP-BINDING PROTEIN ALSA-RELATED"/>
    <property type="match status" value="1"/>
</dbReference>
<dbReference type="Pfam" id="PF00005">
    <property type="entry name" value="ABC_tran"/>
    <property type="match status" value="2"/>
</dbReference>
<dbReference type="SMART" id="SM00382">
    <property type="entry name" value="AAA"/>
    <property type="match status" value="2"/>
</dbReference>
<dbReference type="SUPFAM" id="SSF52540">
    <property type="entry name" value="P-loop containing nucleoside triphosphate hydrolases"/>
    <property type="match status" value="2"/>
</dbReference>
<dbReference type="PROSITE" id="PS00211">
    <property type="entry name" value="ABC_TRANSPORTER_1"/>
    <property type="match status" value="1"/>
</dbReference>
<dbReference type="PROSITE" id="PS50893">
    <property type="entry name" value="ABC_TRANSPORTER_2"/>
    <property type="match status" value="2"/>
</dbReference>
<dbReference type="PROSITE" id="PS51254">
    <property type="entry name" value="RBSA"/>
    <property type="match status" value="1"/>
</dbReference>
<comment type="function">
    <text evidence="1">Part of the ABC transporter complex RbsABC involved in ribose import. Responsible for energy coupling to the transport system.</text>
</comment>
<comment type="catalytic activity">
    <reaction evidence="1">
        <text>D-ribose(out) + ATP + H2O = D-ribose(in) + ADP + phosphate + H(+)</text>
        <dbReference type="Rhea" id="RHEA:29903"/>
        <dbReference type="ChEBI" id="CHEBI:15377"/>
        <dbReference type="ChEBI" id="CHEBI:15378"/>
        <dbReference type="ChEBI" id="CHEBI:30616"/>
        <dbReference type="ChEBI" id="CHEBI:43474"/>
        <dbReference type="ChEBI" id="CHEBI:47013"/>
        <dbReference type="ChEBI" id="CHEBI:456216"/>
        <dbReference type="EC" id="7.5.2.7"/>
    </reaction>
</comment>
<comment type="subunit">
    <text evidence="1">The complex is composed of an ATP-binding protein (RbsA), two transmembrane proteins (RbsC) and a solute-binding protein (RbsB).</text>
</comment>
<comment type="subcellular location">
    <subcellularLocation>
        <location evidence="1">Cell inner membrane</location>
        <topology evidence="1">Peripheral membrane protein</topology>
    </subcellularLocation>
</comment>
<comment type="similarity">
    <text evidence="1">Belongs to the ABC transporter superfamily. Ribose importer (TC 3.A.1.2.1) family.</text>
</comment>
<protein>
    <recommendedName>
        <fullName evidence="1">Ribose import ATP-binding protein RbsA</fullName>
        <ecNumber evidence="1">7.5.2.7</ecNumber>
    </recommendedName>
</protein>
<keyword id="KW-0067">ATP-binding</keyword>
<keyword id="KW-0997">Cell inner membrane</keyword>
<keyword id="KW-1003">Cell membrane</keyword>
<keyword id="KW-0472">Membrane</keyword>
<keyword id="KW-0547">Nucleotide-binding</keyword>
<keyword id="KW-1185">Reference proteome</keyword>
<keyword id="KW-0677">Repeat</keyword>
<keyword id="KW-0762">Sugar transport</keyword>
<keyword id="KW-1278">Translocase</keyword>
<keyword id="KW-0813">Transport</keyword>
<evidence type="ECO:0000255" key="1">
    <source>
        <dbReference type="HAMAP-Rule" id="MF_01716"/>
    </source>
</evidence>
<organism>
    <name type="scientific">Rhodopirellula baltica (strain DSM 10527 / NCIMB 13988 / SH1)</name>
    <dbReference type="NCBI Taxonomy" id="243090"/>
    <lineage>
        <taxon>Bacteria</taxon>
        <taxon>Pseudomonadati</taxon>
        <taxon>Planctomycetota</taxon>
        <taxon>Planctomycetia</taxon>
        <taxon>Pirellulales</taxon>
        <taxon>Pirellulaceae</taxon>
        <taxon>Rhodopirellula</taxon>
    </lineage>
</organism>
<name>RBSA_RHOBA</name>
<gene>
    <name evidence="1" type="primary">rbsA</name>
    <name type="ordered locus">RB3496</name>
</gene>
<feature type="chain" id="PRO_0000261093" description="Ribose import ATP-binding protein RbsA">
    <location>
        <begin position="1"/>
        <end position="511"/>
    </location>
</feature>
<feature type="domain" description="ABC transporter 1" evidence="1">
    <location>
        <begin position="9"/>
        <end position="245"/>
    </location>
</feature>
<feature type="domain" description="ABC transporter 2" evidence="1">
    <location>
        <begin position="261"/>
        <end position="506"/>
    </location>
</feature>
<feature type="binding site" evidence="1">
    <location>
        <begin position="41"/>
        <end position="48"/>
    </location>
    <ligand>
        <name>ATP</name>
        <dbReference type="ChEBI" id="CHEBI:30616"/>
    </ligand>
</feature>